<name>ALKB1_HUMAN</name>
<protein>
    <recommendedName>
        <fullName evidence="18">Nucleic acid dioxygenase ALKBH1</fullName>
        <ecNumber evidence="11">1.14.11.-</ecNumber>
    </recommendedName>
    <alternativeName>
        <fullName evidence="17">Alkylated DNA repair protein alkB homolog 1</fullName>
    </alternativeName>
    <alternativeName>
        <fullName evidence="17">Alpha-ketoglutarate-dependent dioxygenase ABH1</fullName>
    </alternativeName>
    <alternativeName>
        <fullName evidence="1">DNA 6mA demethylase</fullName>
    </alternativeName>
    <alternativeName>
        <fullName evidence="18">DNA N6-methyl adenine demethylase ALKBH1</fullName>
        <ecNumber evidence="13">1.14.11.51</ecNumber>
    </alternativeName>
    <alternativeName>
        <fullName evidence="17">DNA lyase ABH1</fullName>
        <ecNumber evidence="20">4.2.99.18</ecNumber>
    </alternativeName>
    <alternativeName>
        <fullName>DNA oxidative demethylase ALKBH1</fullName>
        <ecNumber evidence="19">1.14.11.33</ecNumber>
    </alternativeName>
    <alternativeName>
        <fullName evidence="18">mRNA N(3)-methylcytidine demethylase</fullName>
        <ecNumber evidence="23">1.14.11.-</ecNumber>
    </alternativeName>
</protein>
<organism>
    <name type="scientific">Homo sapiens</name>
    <name type="common">Human</name>
    <dbReference type="NCBI Taxonomy" id="9606"/>
    <lineage>
        <taxon>Eukaryota</taxon>
        <taxon>Metazoa</taxon>
        <taxon>Chordata</taxon>
        <taxon>Craniata</taxon>
        <taxon>Vertebrata</taxon>
        <taxon>Euteleostomi</taxon>
        <taxon>Mammalia</taxon>
        <taxon>Eutheria</taxon>
        <taxon>Euarchontoglires</taxon>
        <taxon>Primates</taxon>
        <taxon>Haplorrhini</taxon>
        <taxon>Catarrhini</taxon>
        <taxon>Hominidae</taxon>
        <taxon>Homo</taxon>
    </lineage>
</organism>
<accession>Q13686</accession>
<accession>Q8TAU1</accession>
<accession>Q9ULA7</accession>
<proteinExistence type="evidence at protein level"/>
<dbReference type="EC" id="1.14.11.-" evidence="11 23"/>
<dbReference type="EC" id="1.14.11.51" evidence="13"/>
<dbReference type="EC" id="4.2.99.18" evidence="20"/>
<dbReference type="EC" id="1.14.11.33" evidence="19"/>
<dbReference type="EMBL" id="X91992">
    <property type="protein sequence ID" value="CAA63047.1"/>
    <property type="status" value="ALT_FRAME"/>
    <property type="molecule type" value="mRNA"/>
</dbReference>
<dbReference type="EMBL" id="AC008044">
    <property type="protein sequence ID" value="AAF01478.1"/>
    <property type="molecule type" value="Genomic_DNA"/>
</dbReference>
<dbReference type="EMBL" id="BC025787">
    <property type="protein sequence ID" value="AAH25787.1"/>
    <property type="molecule type" value="mRNA"/>
</dbReference>
<dbReference type="CCDS" id="CCDS32127.1"/>
<dbReference type="PIR" id="S64736">
    <property type="entry name" value="S64736"/>
</dbReference>
<dbReference type="RefSeq" id="NP_006011.2">
    <property type="nucleotide sequence ID" value="NM_006020.3"/>
</dbReference>
<dbReference type="PDB" id="6IE2">
    <property type="method" value="X-ray"/>
    <property type="resolution" value="2.80 A"/>
    <property type="chains" value="A/B/C/D/E/F/G/H=1-389"/>
</dbReference>
<dbReference type="PDB" id="6IE3">
    <property type="method" value="X-ray"/>
    <property type="resolution" value="1.97 A"/>
    <property type="chains" value="A=1-389"/>
</dbReference>
<dbReference type="PDB" id="8K62">
    <property type="method" value="X-ray"/>
    <property type="resolution" value="1.99 A"/>
    <property type="chains" value="A=1-389"/>
</dbReference>
<dbReference type="PDBsum" id="6IE2"/>
<dbReference type="PDBsum" id="6IE3"/>
<dbReference type="PDBsum" id="8K62"/>
<dbReference type="SMR" id="Q13686"/>
<dbReference type="BioGRID" id="114372">
    <property type="interactions" value="6"/>
</dbReference>
<dbReference type="FunCoup" id="Q13686">
    <property type="interactions" value="4582"/>
</dbReference>
<dbReference type="IntAct" id="Q13686">
    <property type="interactions" value="2"/>
</dbReference>
<dbReference type="STRING" id="9606.ENSP00000216489"/>
<dbReference type="BindingDB" id="Q13686"/>
<dbReference type="ChEMBL" id="CHEMBL5169151"/>
<dbReference type="GlyGen" id="Q13686">
    <property type="glycosylation" value="1 site, 1 O-linked glycan (1 site)"/>
</dbReference>
<dbReference type="iPTMnet" id="Q13686"/>
<dbReference type="PhosphoSitePlus" id="Q13686"/>
<dbReference type="SwissPalm" id="Q13686"/>
<dbReference type="BioMuta" id="ALKBH1"/>
<dbReference type="jPOST" id="Q13686"/>
<dbReference type="MassIVE" id="Q13686"/>
<dbReference type="PaxDb" id="9606-ENSP00000216489"/>
<dbReference type="PeptideAtlas" id="Q13686"/>
<dbReference type="ProteomicsDB" id="59661"/>
<dbReference type="Pumba" id="Q13686"/>
<dbReference type="Antibodypedia" id="26095">
    <property type="antibodies" value="266 antibodies from 32 providers"/>
</dbReference>
<dbReference type="DNASU" id="8846"/>
<dbReference type="Ensembl" id="ENST00000216489.8">
    <property type="protein sequence ID" value="ENSP00000216489.3"/>
    <property type="gene ID" value="ENSG00000100601.10"/>
</dbReference>
<dbReference type="GeneID" id="8846"/>
<dbReference type="KEGG" id="hsa:8846"/>
<dbReference type="MANE-Select" id="ENST00000216489.8">
    <property type="protein sequence ID" value="ENSP00000216489.3"/>
    <property type="RefSeq nucleotide sequence ID" value="NM_006020.3"/>
    <property type="RefSeq protein sequence ID" value="NP_006011.2"/>
</dbReference>
<dbReference type="UCSC" id="uc001xuc.2">
    <property type="organism name" value="human"/>
</dbReference>
<dbReference type="AGR" id="HGNC:17911"/>
<dbReference type="CTD" id="8846"/>
<dbReference type="DisGeNET" id="8846"/>
<dbReference type="GeneCards" id="ALKBH1"/>
<dbReference type="HGNC" id="HGNC:17911">
    <property type="gene designation" value="ALKBH1"/>
</dbReference>
<dbReference type="HPA" id="ENSG00000100601">
    <property type="expression patterns" value="Low tissue specificity"/>
</dbReference>
<dbReference type="MalaCards" id="ALKBH1"/>
<dbReference type="MIM" id="605345">
    <property type="type" value="gene"/>
</dbReference>
<dbReference type="neXtProt" id="NX_Q13686"/>
<dbReference type="OpenTargets" id="ENSG00000100601"/>
<dbReference type="PharmGKB" id="PA134906996"/>
<dbReference type="VEuPathDB" id="HostDB:ENSG00000100601"/>
<dbReference type="eggNOG" id="KOG2731">
    <property type="taxonomic scope" value="Eukaryota"/>
</dbReference>
<dbReference type="GeneTree" id="ENSGT00390000004599"/>
<dbReference type="HOGENOM" id="CLU_029471_2_1_1"/>
<dbReference type="InParanoid" id="Q13686"/>
<dbReference type="OMA" id="YKRRDPP"/>
<dbReference type="OrthoDB" id="6614653at2759"/>
<dbReference type="PAN-GO" id="Q13686">
    <property type="GO annotations" value="7 GO annotations based on evolutionary models"/>
</dbReference>
<dbReference type="PhylomeDB" id="Q13686"/>
<dbReference type="TreeFam" id="TF314609"/>
<dbReference type="BRENDA" id="1.14.11.51">
    <property type="organism ID" value="2681"/>
</dbReference>
<dbReference type="PathwayCommons" id="Q13686"/>
<dbReference type="SignaLink" id="Q13686"/>
<dbReference type="BioGRID-ORCS" id="8846">
    <property type="hits" value="12 hits in 1160 CRISPR screens"/>
</dbReference>
<dbReference type="ChiTaRS" id="ALKBH1">
    <property type="organism name" value="human"/>
</dbReference>
<dbReference type="GenomeRNAi" id="8846"/>
<dbReference type="Pharos" id="Q13686">
    <property type="development level" value="Tbio"/>
</dbReference>
<dbReference type="PRO" id="PR:Q13686"/>
<dbReference type="Proteomes" id="UP000005640">
    <property type="component" value="Chromosome 14"/>
</dbReference>
<dbReference type="RNAct" id="Q13686">
    <property type="molecule type" value="protein"/>
</dbReference>
<dbReference type="Bgee" id="ENSG00000100601">
    <property type="expression patterns" value="Expressed in oocyte and 201 other cell types or tissues"/>
</dbReference>
<dbReference type="ExpressionAtlas" id="Q13686">
    <property type="expression patterns" value="baseline and differential"/>
</dbReference>
<dbReference type="GO" id="GO:0005737">
    <property type="term" value="C:cytoplasm"/>
    <property type="evidence" value="ECO:0000318"/>
    <property type="project" value="GO_Central"/>
</dbReference>
<dbReference type="GO" id="GO:0005783">
    <property type="term" value="C:endoplasmic reticulum"/>
    <property type="evidence" value="ECO:0000314"/>
    <property type="project" value="HPA"/>
</dbReference>
<dbReference type="GO" id="GO:0000791">
    <property type="term" value="C:euchromatin"/>
    <property type="evidence" value="ECO:0007669"/>
    <property type="project" value="Ensembl"/>
</dbReference>
<dbReference type="GO" id="GO:0005739">
    <property type="term" value="C:mitochondrion"/>
    <property type="evidence" value="ECO:0000314"/>
    <property type="project" value="UniProtKB"/>
</dbReference>
<dbReference type="GO" id="GO:0005654">
    <property type="term" value="C:nucleoplasm"/>
    <property type="evidence" value="ECO:0000314"/>
    <property type="project" value="HPA"/>
</dbReference>
<dbReference type="GO" id="GO:0005634">
    <property type="term" value="C:nucleus"/>
    <property type="evidence" value="ECO:0000318"/>
    <property type="project" value="GO_Central"/>
</dbReference>
<dbReference type="GO" id="GO:0016706">
    <property type="term" value="F:2-oxoglutarate-dependent dioxygenase activity"/>
    <property type="evidence" value="ECO:0000314"/>
    <property type="project" value="UniProtKB"/>
</dbReference>
<dbReference type="GO" id="GO:0035516">
    <property type="term" value="F:broad specificity oxidative DNA demethylase activity"/>
    <property type="evidence" value="ECO:0000314"/>
    <property type="project" value="UniProtKB"/>
</dbReference>
<dbReference type="GO" id="GO:0042056">
    <property type="term" value="F:chemoattractant activity"/>
    <property type="evidence" value="ECO:0007669"/>
    <property type="project" value="Ensembl"/>
</dbReference>
<dbReference type="GO" id="GO:0140078">
    <property type="term" value="F:class I DNA-(apurinic or apyrimidinic site) endonuclease activity"/>
    <property type="evidence" value="ECO:0000314"/>
    <property type="project" value="UniProtKB"/>
</dbReference>
<dbReference type="GO" id="GO:0141131">
    <property type="term" value="F:DNA N6-methyladenine demethylase activity"/>
    <property type="evidence" value="ECO:0007669"/>
    <property type="project" value="UniProtKB-EC"/>
</dbReference>
<dbReference type="GO" id="GO:0008198">
    <property type="term" value="F:ferrous iron binding"/>
    <property type="evidence" value="ECO:0000314"/>
    <property type="project" value="UniProtKB"/>
</dbReference>
<dbReference type="GO" id="GO:0035515">
    <property type="term" value="F:oxidative RNA demethylase activity"/>
    <property type="evidence" value="ECO:0000314"/>
    <property type="project" value="UniProtKB"/>
</dbReference>
<dbReference type="GO" id="GO:0000049">
    <property type="term" value="F:tRNA binding"/>
    <property type="evidence" value="ECO:0000314"/>
    <property type="project" value="UniProtKB"/>
</dbReference>
<dbReference type="GO" id="GO:1990984">
    <property type="term" value="F:tRNA demethylase activity"/>
    <property type="evidence" value="ECO:0000314"/>
    <property type="project" value="UniProtKB"/>
</dbReference>
<dbReference type="GO" id="GO:0048589">
    <property type="term" value="P:developmental growth"/>
    <property type="evidence" value="ECO:0007669"/>
    <property type="project" value="Ensembl"/>
</dbReference>
<dbReference type="GO" id="GO:0006281">
    <property type="term" value="P:DNA repair"/>
    <property type="evidence" value="ECO:0000314"/>
    <property type="project" value="UniProtKB"/>
</dbReference>
<dbReference type="GO" id="GO:0001701">
    <property type="term" value="P:in utero embryonic development"/>
    <property type="evidence" value="ECO:0007669"/>
    <property type="project" value="Ensembl"/>
</dbReference>
<dbReference type="GO" id="GO:0043524">
    <property type="term" value="P:negative regulation of neuron apoptotic process"/>
    <property type="evidence" value="ECO:0007669"/>
    <property type="project" value="Ensembl"/>
</dbReference>
<dbReference type="GO" id="GO:0001764">
    <property type="term" value="P:neuron migration"/>
    <property type="evidence" value="ECO:0007669"/>
    <property type="project" value="Ensembl"/>
</dbReference>
<dbReference type="GO" id="GO:0031175">
    <property type="term" value="P:neuron projection development"/>
    <property type="evidence" value="ECO:0007669"/>
    <property type="project" value="Ensembl"/>
</dbReference>
<dbReference type="GO" id="GO:0035513">
    <property type="term" value="P:oxidative RNA demethylation"/>
    <property type="evidence" value="ECO:0000314"/>
    <property type="project" value="UniProtKB"/>
</dbReference>
<dbReference type="GO" id="GO:0001890">
    <property type="term" value="P:placenta development"/>
    <property type="evidence" value="ECO:0007669"/>
    <property type="project" value="Ensembl"/>
</dbReference>
<dbReference type="GO" id="GO:0141137">
    <property type="term" value="P:positive regulation of gene expression, epigenetic"/>
    <property type="evidence" value="ECO:0000314"/>
    <property type="project" value="UniProtKB"/>
</dbReference>
<dbReference type="GO" id="GO:0070129">
    <property type="term" value="P:regulation of mitochondrial translation"/>
    <property type="evidence" value="ECO:0000315"/>
    <property type="project" value="UniProtKB"/>
</dbReference>
<dbReference type="GO" id="GO:0006448">
    <property type="term" value="P:regulation of translational elongation"/>
    <property type="evidence" value="ECO:0000315"/>
    <property type="project" value="UniProtKB"/>
</dbReference>
<dbReference type="GO" id="GO:0006446">
    <property type="term" value="P:regulation of translational initiation"/>
    <property type="evidence" value="ECO:0000315"/>
    <property type="project" value="UniProtKB"/>
</dbReference>
<dbReference type="GO" id="GO:1990983">
    <property type="term" value="P:regulation of translational initiation by tRNA modification"/>
    <property type="evidence" value="ECO:0000314"/>
    <property type="project" value="UniProtKB"/>
</dbReference>
<dbReference type="GO" id="GO:0042245">
    <property type="term" value="P:RNA repair"/>
    <property type="evidence" value="ECO:0007669"/>
    <property type="project" value="UniProtKB-KW"/>
</dbReference>
<dbReference type="GO" id="GO:0002101">
    <property type="term" value="P:tRNA wobble cytosine modification"/>
    <property type="evidence" value="ECO:0000314"/>
    <property type="project" value="UniProtKB"/>
</dbReference>
<dbReference type="FunFam" id="2.60.120.590:FF:000006">
    <property type="entry name" value="AlkB homolog 1, histone H2A dioxygenase"/>
    <property type="match status" value="1"/>
</dbReference>
<dbReference type="Gene3D" id="2.60.120.590">
    <property type="entry name" value="Alpha-ketoglutarate-dependent dioxygenase AlkB-like"/>
    <property type="match status" value="1"/>
</dbReference>
<dbReference type="InterPro" id="IPR004574">
    <property type="entry name" value="Alkb"/>
</dbReference>
<dbReference type="InterPro" id="IPR027450">
    <property type="entry name" value="AlkB-like"/>
</dbReference>
<dbReference type="InterPro" id="IPR037151">
    <property type="entry name" value="AlkB-like_sf"/>
</dbReference>
<dbReference type="InterPro" id="IPR005123">
    <property type="entry name" value="Oxoglu/Fe-dep_dioxygenase_dom"/>
</dbReference>
<dbReference type="NCBIfam" id="TIGR00568">
    <property type="entry name" value="alkb"/>
    <property type="match status" value="1"/>
</dbReference>
<dbReference type="PANTHER" id="PTHR16557">
    <property type="entry name" value="ALKYLATED DNA REPAIR PROTEIN ALKB-RELATED"/>
    <property type="match status" value="1"/>
</dbReference>
<dbReference type="PANTHER" id="PTHR16557:SF2">
    <property type="entry name" value="NUCLEIC ACID DIOXYGENASE ALKBH1"/>
    <property type="match status" value="1"/>
</dbReference>
<dbReference type="Pfam" id="PF13532">
    <property type="entry name" value="2OG-FeII_Oxy_2"/>
    <property type="match status" value="1"/>
</dbReference>
<dbReference type="SUPFAM" id="SSF51197">
    <property type="entry name" value="Clavaminate synthase-like"/>
    <property type="match status" value="1"/>
</dbReference>
<dbReference type="PROSITE" id="PS51471">
    <property type="entry name" value="FE2OG_OXY"/>
    <property type="match status" value="1"/>
</dbReference>
<sequence>MGKMAAAVGSVATLATEPGEDAFRKLFRFYRQSRPGTADLEGVIDFSAAHAARGKGPGAQKVIKSQLNVSSVSEQNAYRAGLQPVSKWQAYGLKGYPGFIFIPNPFLPGYQWHWVKQCLKLYSQKPNVCNLDKHMSKEETQDLWEQSKEFLRYKEATKRRPRSLLEKLRWVTVGYHYNWDSKKYSADHYTPFPSDLGFLSEQVAAACGFEDFRAEAGILNYYRLDSTLGIHVDRSELDHSKPLLSFSFGQSAIFLLGGLQRDEAPTAMFMHSGDIMIMSGFSRLLNHAVPRVLPNPEGEGLPHCLEAPLPAVLPRDSMVEPCSMEDWQVCASYLKTARVNMTVRQVLATDQNFPLEPIEDEKRDISTEGFCHLDDQNSEVKRARINPDS</sequence>
<keyword id="KW-0002">3D-structure</keyword>
<keyword id="KW-0223">Dioxygenase</keyword>
<keyword id="KW-0227">DNA damage</keyword>
<keyword id="KW-0234">DNA repair</keyword>
<keyword id="KW-0408">Iron</keyword>
<keyword id="KW-0456">Lyase</keyword>
<keyword id="KW-0479">Metal-binding</keyword>
<keyword id="KW-0496">Mitochondrion</keyword>
<keyword id="KW-0511">Multifunctional enzyme</keyword>
<keyword id="KW-0539">Nucleus</keyword>
<keyword id="KW-0560">Oxidoreductase</keyword>
<keyword id="KW-1267">Proteomics identification</keyword>
<keyword id="KW-1185">Reference proteome</keyword>
<keyword id="KW-0692">RNA repair</keyword>
<keyword id="KW-0804">Transcription</keyword>
<keyword id="KW-0805">Transcription regulation</keyword>
<keyword id="KW-0810">Translation regulation</keyword>
<reference key="1">
    <citation type="journal article" date="1996" name="Nucleic Acids Res.">
        <title>Molecular cloning and functional analysis of a human cDNA encoding an Escherichia coli AlkB homolog, a protein involved in DNA alkylation damage repair.</title>
        <authorList>
            <person name="Wei Y.F."/>
            <person name="Carter K.C."/>
            <person name="Wang R.P."/>
            <person name="Shell B.K."/>
        </authorList>
    </citation>
    <scope>NUCLEOTIDE SEQUENCE [MRNA]</scope>
    <source>
        <tissue>Synovial sarcoma</tissue>
    </source>
</reference>
<reference key="2">
    <citation type="journal article" date="2003" name="Nature">
        <title>The DNA sequence and analysis of human chromosome 14.</title>
        <authorList>
            <person name="Heilig R."/>
            <person name="Eckenberg R."/>
            <person name="Petit J.-L."/>
            <person name="Fonknechten N."/>
            <person name="Da Silva C."/>
            <person name="Cattolico L."/>
            <person name="Levy M."/>
            <person name="Barbe V."/>
            <person name="De Berardinis V."/>
            <person name="Ureta-Vidal A."/>
            <person name="Pelletier E."/>
            <person name="Vico V."/>
            <person name="Anthouard V."/>
            <person name="Rowen L."/>
            <person name="Madan A."/>
            <person name="Qin S."/>
            <person name="Sun H."/>
            <person name="Du H."/>
            <person name="Pepin K."/>
            <person name="Artiguenave F."/>
            <person name="Robert C."/>
            <person name="Cruaud C."/>
            <person name="Bruels T."/>
            <person name="Jaillon O."/>
            <person name="Friedlander L."/>
            <person name="Samson G."/>
            <person name="Brottier P."/>
            <person name="Cure S."/>
            <person name="Segurens B."/>
            <person name="Aniere F."/>
            <person name="Samain S."/>
            <person name="Crespeau H."/>
            <person name="Abbasi N."/>
            <person name="Aiach N."/>
            <person name="Boscus D."/>
            <person name="Dickhoff R."/>
            <person name="Dors M."/>
            <person name="Dubois I."/>
            <person name="Friedman C."/>
            <person name="Gouyvenoux M."/>
            <person name="James R."/>
            <person name="Madan A."/>
            <person name="Mairey-Estrada B."/>
            <person name="Mangenot S."/>
            <person name="Martins N."/>
            <person name="Menard M."/>
            <person name="Oztas S."/>
            <person name="Ratcliffe A."/>
            <person name="Shaffer T."/>
            <person name="Trask B."/>
            <person name="Vacherie B."/>
            <person name="Bellemere C."/>
            <person name="Belser C."/>
            <person name="Besnard-Gonnet M."/>
            <person name="Bartol-Mavel D."/>
            <person name="Boutard M."/>
            <person name="Briez-Silla S."/>
            <person name="Combette S."/>
            <person name="Dufosse-Laurent V."/>
            <person name="Ferron C."/>
            <person name="Lechaplais C."/>
            <person name="Louesse C."/>
            <person name="Muselet D."/>
            <person name="Magdelenat G."/>
            <person name="Pateau E."/>
            <person name="Petit E."/>
            <person name="Sirvain-Trukniewicz P."/>
            <person name="Trybou A."/>
            <person name="Vega-Czarny N."/>
            <person name="Bataille E."/>
            <person name="Bluet E."/>
            <person name="Bordelais I."/>
            <person name="Dubois M."/>
            <person name="Dumont C."/>
            <person name="Guerin T."/>
            <person name="Haffray S."/>
            <person name="Hammadi R."/>
            <person name="Muanga J."/>
            <person name="Pellouin V."/>
            <person name="Robert D."/>
            <person name="Wunderle E."/>
            <person name="Gauguet G."/>
            <person name="Roy A."/>
            <person name="Sainte-Marthe L."/>
            <person name="Verdier J."/>
            <person name="Verdier-Discala C."/>
            <person name="Hillier L.W."/>
            <person name="Fulton L."/>
            <person name="McPherson J."/>
            <person name="Matsuda F."/>
            <person name="Wilson R."/>
            <person name="Scarpelli C."/>
            <person name="Gyapay G."/>
            <person name="Wincker P."/>
            <person name="Saurin W."/>
            <person name="Quetier F."/>
            <person name="Waterston R."/>
            <person name="Hood L."/>
            <person name="Weissenbach J."/>
        </authorList>
    </citation>
    <scope>NUCLEOTIDE SEQUENCE [LARGE SCALE GENOMIC DNA]</scope>
</reference>
<reference key="3">
    <citation type="journal article" date="2004" name="Genome Res.">
        <title>The status, quality, and expansion of the NIH full-length cDNA project: the Mammalian Gene Collection (MGC).</title>
        <authorList>
            <consortium name="The MGC Project Team"/>
        </authorList>
    </citation>
    <scope>NUCLEOTIDE SEQUENCE [LARGE SCALE MRNA]</scope>
    <source>
        <tissue>Pancreas</tissue>
    </source>
</reference>
<reference key="4">
    <citation type="journal article" date="2007" name="J. Cell. Mol. Med.">
        <title>Expression and sub-cellular localization of human ABH family molecules.</title>
        <authorList>
            <person name="Tsujikawa K."/>
            <person name="Koike K."/>
            <person name="Kitae K."/>
            <person name="Shinkawa A."/>
            <person name="Arima H."/>
            <person name="Suzuki T."/>
            <person name="Tsuchiya M."/>
            <person name="Makino Y."/>
            <person name="Furukawa T."/>
            <person name="Konishi N."/>
            <person name="Yamamoto H."/>
        </authorList>
    </citation>
    <scope>SUBCELLULAR LOCATION</scope>
    <scope>TISSUE SPECIFICITY</scope>
</reference>
<reference key="5">
    <citation type="journal article" date="2008" name="J. Biol. Chem.">
        <title>Human AlkB homolog 1 is a mitochondrial protein that demethylates 3-methylcytosine in DNA and RNA.</title>
        <authorList>
            <person name="Westbye M.P."/>
            <person name="Feyzi E."/>
            <person name="Aas P.A."/>
            <person name="Vagbo C.B."/>
            <person name="Talstad V.A."/>
            <person name="Kavli B."/>
            <person name="Hagen L."/>
            <person name="Sundheim O."/>
            <person name="Akbari M."/>
            <person name="Liabakk N.B."/>
            <person name="Slupphaug G."/>
            <person name="Otterlei M."/>
            <person name="Krokan H.E."/>
        </authorList>
    </citation>
    <scope>FUNCTION</scope>
    <scope>COFACTOR</scope>
    <scope>SUBCELLULAR LOCATION</scope>
    <scope>MUTAGENESIS OF ILE-218; HIS-231; ASP-233; HIS-287; ARG-338 AND ARG-344</scope>
    <scope>IDENTIFICATION BY MASS SPECTROMETRY</scope>
    <scope>TISSUE SPECIFICITY</scope>
</reference>
<reference key="6">
    <citation type="journal article" date="2010" name="DNA Repair">
        <title>Human AlkB homologue 1 (ABH1) exhibits DNA lyase activity at abasic sites.</title>
        <authorList>
            <person name="Muller T.A."/>
            <person name="Meek K."/>
            <person name="Hausinger R.P."/>
        </authorList>
    </citation>
    <scope>FUNCTION</scope>
    <scope>SUBUNIT</scope>
    <scope>MUTAGENESIS OF HIS-231; ASP-233 AND HIS-287</scope>
</reference>
<reference key="7">
    <citation type="journal article" date="2012" name="Proc. Natl. Acad. Sci. U.S.A.">
        <title>N-terminal acetylome analyses and functional insights of the N-terminal acetyltransferase NatB.</title>
        <authorList>
            <person name="Van Damme P."/>
            <person name="Lasa M."/>
            <person name="Polevoda B."/>
            <person name="Gazquez C."/>
            <person name="Elosegui-Artola A."/>
            <person name="Kim D.S."/>
            <person name="De Juan-Pardo E."/>
            <person name="Demeyer K."/>
            <person name="Hole K."/>
            <person name="Larrea E."/>
            <person name="Timmerman E."/>
            <person name="Prieto J."/>
            <person name="Arnesen T."/>
            <person name="Sherman F."/>
            <person name="Gevaert K."/>
            <person name="Aldabe R."/>
        </authorList>
    </citation>
    <scope>IDENTIFICATION BY MASS SPECTROMETRY [LARGE SCALE ANALYSIS]</scope>
</reference>
<reference key="8">
    <citation type="journal article" date="2012" name="Stem Cells">
        <title>ALKBH1 is a histone H2A dioxygenase involved in neural differentiation.</title>
        <authorList>
            <person name="Ougland R."/>
            <person name="Lando D."/>
            <person name="Jonson I."/>
            <person name="Dahl J.A."/>
            <person name="Moen M.N."/>
            <person name="Nordstrand L.M."/>
            <person name="Rognes T."/>
            <person name="Lee J.T."/>
            <person name="Klungland A."/>
            <person name="Kouzarides T."/>
            <person name="Larsen E."/>
        </authorList>
    </citation>
    <scope>SUBCELLULAR LOCATION</scope>
</reference>
<reference key="9">
    <citation type="journal article" date="2013" name="Biochem. J.">
        <title>A covalent protein-DNA 5'-product adduct is generated following AP lyase activity of human ALKBH1 (AlkB homologue 1).</title>
        <authorList>
            <person name="Mueller T.A."/>
            <person name="Andrzejak M.M."/>
            <person name="Hausinger R.P."/>
        </authorList>
    </citation>
    <scope>FUNCTION</scope>
    <scope>MUTAGENESIS OF LYS-3; LYS-25; LYS-55; LYS-61; LYS-64; LYS-87; LYS-94; LYS-116; LYS-120; LYS-125; LYS-133; LYS-137; LYS-148; LYS-154; LYS-158; LYS-167; LYS-182; LYS-183; LYS-241; LYS-335; LYS-362 AND LYS-381</scope>
</reference>
<reference key="10">
    <citation type="journal article" date="2014" name="J. Mol. Graph. Model.">
        <title>Homology modeling, molecular dynamics, and site-directed mutagenesis study of AlkB human homolog 1 (ALKBH1).</title>
        <authorList>
            <person name="Silvestrov P."/>
            <person name="Mueller T.A."/>
            <person name="Clark K.N."/>
            <person name="Hausinger R.P."/>
            <person name="Cisneros G.A."/>
        </authorList>
    </citation>
    <scope>MUTAGENESIS OF HIS-113; CYS-118; CYS-129; HIS-134; HIS-303; CYS-304; CYS-371 AND HIS-372</scope>
</reference>
<reference key="11">
    <citation type="journal article" date="2016" name="Cell">
        <title>ALKBH1-mediated tRNA demethylation regulates translation.</title>
        <authorList>
            <person name="Liu F."/>
            <person name="Clark W."/>
            <person name="Luo G."/>
            <person name="Wang X."/>
            <person name="Fu Y."/>
            <person name="Wei J."/>
            <person name="Wang X."/>
            <person name="Hao Z."/>
            <person name="Dai Q."/>
            <person name="Zheng G."/>
            <person name="Ma H."/>
            <person name="Han D."/>
            <person name="Evans M."/>
            <person name="Klungland A."/>
            <person name="Pan T."/>
            <person name="He C."/>
        </authorList>
    </citation>
    <scope>FUNCTION</scope>
    <scope>CATALYTIC ACTIVITY</scope>
    <scope>MUTAGENESIS OF 231-HIS--ASP-233</scope>
</reference>
<reference key="12">
    <citation type="journal article" date="2016" name="EMBO J.">
        <title>NSUN3 and ABH1 modify the wobble position of mt-tRNAMet to expand codon recognition in mitochondrial translation.</title>
        <authorList>
            <person name="Haag S."/>
            <person name="Sloan K.E."/>
            <person name="Ranjan N."/>
            <person name="Warda A.S."/>
            <person name="Kretschmer J."/>
            <person name="Blessing C."/>
            <person name="Huebner B."/>
            <person name="Seikowski J."/>
            <person name="Dennerlein S."/>
            <person name="Rehling P."/>
            <person name="Rodnina M.V."/>
            <person name="Hoebartner C."/>
            <person name="Bohnsack M.T."/>
        </authorList>
    </citation>
    <scope>FUNCTION</scope>
    <scope>CATALYTIC ACTIVITY</scope>
    <scope>SUBCELLULAR LOCATION</scope>
    <scope>MUTAGENESIS OF ASP-233 AND ARG-338</scope>
</reference>
<reference key="13">
    <citation type="journal article" date="2018" name="Cell">
        <title>N6-methyladenine DNA modification in glioblastoma.</title>
        <authorList>
            <person name="Xie Q."/>
            <person name="Wu T.P."/>
            <person name="Gimple R.C."/>
            <person name="Li Z."/>
            <person name="Prager B.C."/>
            <person name="Wu Q."/>
            <person name="Yu Y."/>
            <person name="Wang P."/>
            <person name="Wang Y."/>
            <person name="Gorkin D.U."/>
            <person name="Zhang C."/>
            <person name="Dowiak A.V."/>
            <person name="Lin K."/>
            <person name="Zeng C."/>
            <person name="Sui Y."/>
            <person name="Kim L.J.Y."/>
            <person name="Miller T.E."/>
            <person name="Jiang L."/>
            <person name="Lee C.H."/>
            <person name="Huang Z."/>
            <person name="Fang X."/>
            <person name="Zhai K."/>
            <person name="Mack S.C."/>
            <person name="Sander M."/>
            <person name="Bao S."/>
            <person name="Kerstetter-Fogle A.E."/>
            <person name="Sloan A.E."/>
            <person name="Xiao A.Z."/>
            <person name="Rich J.N."/>
        </authorList>
    </citation>
    <scope>FUNCTION</scope>
    <scope>CATALYTIC ACTIVITY</scope>
</reference>
<reference key="14">
    <citation type="journal article" date="2018" name="Mol. Cell">
        <title>N6-methyladenine DNA modification in the human genome.</title>
        <authorList>
            <person name="Xiao C.L."/>
            <person name="Zhu S."/>
            <person name="He M."/>
            <person name="Chen D."/>
            <person name="Zhang Q."/>
            <person name="Chen Y."/>
            <person name="Yu G."/>
            <person name="Liu J."/>
            <person name="Xie S.Q."/>
            <person name="Luo F."/>
            <person name="Liang Z."/>
            <person name="Wang D.P."/>
            <person name="Bo X.C."/>
            <person name="Gu X.F."/>
            <person name="Wang K."/>
            <person name="Yan G.R."/>
        </authorList>
    </citation>
    <scope>FUNCTION</scope>
    <scope>CATALYTIC ACTIVITY</scope>
    <scope>COFACTOR</scope>
    <scope>MUTAGENESIS OF ASP-233</scope>
</reference>
<reference key="15">
    <citation type="journal article" date="2019" name="ACS Chem. Biol.">
        <title>AlkB homologue 1 demethylates N3-methylcytidine in mRNA of mammals.</title>
        <authorList>
            <person name="Ma C.J."/>
            <person name="Ding J.H."/>
            <person name="Ye T.T."/>
            <person name="Yuan B.F."/>
            <person name="Feng Y.Q."/>
        </authorList>
    </citation>
    <scope>FUNCTION</scope>
    <scope>CATALYTIC ACTIVITY</scope>
    <scope>MUTAGENESIS OF ASP-233</scope>
</reference>
<gene>
    <name evidence="24" type="primary">ALKBH1</name>
    <name evidence="16" type="synonym">ABH</name>
    <name evidence="17" type="synonym">ABH1</name>
    <name type="synonym">ALKBH</name>
</gene>
<evidence type="ECO:0000250" key="1">
    <source>
        <dbReference type="UniProtKB" id="P0CB42"/>
    </source>
</evidence>
<evidence type="ECO:0000250" key="2">
    <source>
        <dbReference type="UniProtKB" id="Q6NS38"/>
    </source>
</evidence>
<evidence type="ECO:0000250" key="3">
    <source>
        <dbReference type="UniProtKB" id="Q96Q83"/>
    </source>
</evidence>
<evidence type="ECO:0000255" key="4">
    <source>
        <dbReference type="PROSITE-ProRule" id="PRU00805"/>
    </source>
</evidence>
<evidence type="ECO:0000269" key="5">
    <source>
    </source>
</evidence>
<evidence type="ECO:0000269" key="6">
    <source>
    </source>
</evidence>
<evidence type="ECO:0000269" key="7">
    <source>
    </source>
</evidence>
<evidence type="ECO:0000269" key="8">
    <source>
    </source>
</evidence>
<evidence type="ECO:0000269" key="9">
    <source>
    </source>
</evidence>
<evidence type="ECO:0000269" key="10">
    <source>
    </source>
</evidence>
<evidence type="ECO:0000269" key="11">
    <source>
    </source>
</evidence>
<evidence type="ECO:0000269" key="12">
    <source>
    </source>
</evidence>
<evidence type="ECO:0000269" key="13">
    <source>
    </source>
</evidence>
<evidence type="ECO:0000269" key="14">
    <source>
    </source>
</evidence>
<evidence type="ECO:0000269" key="15">
    <source>
    </source>
</evidence>
<evidence type="ECO:0000303" key="16">
    <source>
    </source>
</evidence>
<evidence type="ECO:0000303" key="17">
    <source>
    </source>
</evidence>
<evidence type="ECO:0000305" key="18"/>
<evidence type="ECO:0000305" key="19">
    <source>
    </source>
</evidence>
<evidence type="ECO:0000305" key="20">
    <source>
    </source>
</evidence>
<evidence type="ECO:0000305" key="21">
    <source>
    </source>
</evidence>
<evidence type="ECO:0000305" key="22">
    <source>
    </source>
</evidence>
<evidence type="ECO:0000305" key="23">
    <source>
    </source>
</evidence>
<evidence type="ECO:0000312" key="24">
    <source>
        <dbReference type="HGNC" id="HGNC:17911"/>
    </source>
</evidence>
<evidence type="ECO:0007829" key="25">
    <source>
        <dbReference type="PDB" id="6IE2"/>
    </source>
</evidence>
<evidence type="ECO:0007829" key="26">
    <source>
        <dbReference type="PDB" id="6IE3"/>
    </source>
</evidence>
<evidence type="ECO:0007829" key="27">
    <source>
        <dbReference type="PDB" id="8K62"/>
    </source>
</evidence>
<comment type="function">
    <text evidence="1 6 7 9 11 12 13 14 15">Dioxygenase that acts on nucleic acids, such as DNA and tRNA (PubMed:18603530, PubMed:27497299, PubMed:27745969). Requires molecular oxygen, alpha-ketoglutarate and iron (PubMed:18603530, PubMed:27497299). A number of activities have been described for this dioxygenase, but recent results suggest that it mainly acts on tRNAs and mediates their demethylation or oxidation depending on the context and subcellular compartment (PubMed:27497299, PubMed:27745969). Mainly acts as a tRNA demethylase by removing N(1)-methyladenine from various tRNAs, with a preference for N(1)-methyladenine at position 58 (m1A58) present on a stem loop structure of tRNAs (PubMed:27745969). Acts as a regulator of translation initiation and elongation in response to glucose deprivation: regulates both translation initiation, by mediating demethylation of tRNA(Met), and translation elongation, N(1)-methyladenine-containing tRNAs being preferentially recruited to polysomes to promote translation elongation (PubMed:27745969). In mitochondrion, specifically interacts with mt-tRNA(Met) and mediates oxidation of mt-tRNA(Met) methylated at cytosine(34) to form 5-formylcytosine (f(5)c) at this position (PubMed:27497299). mt-tRNA(Met) containing the f(5)c modification at the wobble position enables recognition of the AUA codon in addition to the AUG codon, expanding codon recognition in mitochondrial translation (PubMed:27497299). Specifically demethylates DNA methylated on the 6th position of adenine (N(6)-methyladenosine) DNA (PubMed:30017583, PubMed:30392959). N(6)-methyladenosine (m6A) DNA is present at some L1 elements in embryonic stem cells and probably promotes their silencing (By similarity). Demethylates mRNAs containing N(3)-methylcytidine modification (PubMed:31188562). Also able to repair alkylated single-stranded DNA by oxidative demethylation, but with low activity (PubMed:18603530). Also has DNA lyase activity and introduces double-stranded breaks at abasic sites: cleaves both single-stranded DNA and double-stranded DNA at abasic sites, with the greatest activity towards double-stranded DNA with two abasic sites (PubMed:19959401). DNA lyase activity does not require alpha-ketoglutarate and iron and leads to the formation of an irreversible covalent protein-DNA adduct with the 5' DNA product (PubMed:19959401, PubMed:23577621). DNA lyase activity is not required during base excision repair and class switch recombination of the immunoglobulin heavy chain during B lymphocyte activation. May play a role in placental trophoblast lineage differentiation (By similarity).</text>
</comment>
<comment type="catalytic activity">
    <reaction evidence="20">
        <text>2'-deoxyribonucleotide-(2'-deoxyribose 5'-phosphate)-2'-deoxyribonucleotide-DNA = a 3'-end 2'-deoxyribonucleotide-(2,3-dehydro-2,3-deoxyribose 5'-phosphate)-DNA + a 5'-end 5'-phospho-2'-deoxyribonucleoside-DNA + H(+)</text>
        <dbReference type="Rhea" id="RHEA:66592"/>
        <dbReference type="Rhea" id="RHEA-COMP:13180"/>
        <dbReference type="Rhea" id="RHEA-COMP:16897"/>
        <dbReference type="Rhea" id="RHEA-COMP:17067"/>
        <dbReference type="ChEBI" id="CHEBI:15378"/>
        <dbReference type="ChEBI" id="CHEBI:136412"/>
        <dbReference type="ChEBI" id="CHEBI:157695"/>
        <dbReference type="ChEBI" id="CHEBI:167181"/>
        <dbReference type="EC" id="4.2.99.18"/>
    </reaction>
</comment>
<comment type="catalytic activity">
    <reaction evidence="19">
        <text>a methylated nucleobase within DNA + 2-oxoglutarate + O2 = a nucleobase within DNA + formaldehyde + succinate + CO2</text>
        <dbReference type="Rhea" id="RHEA:30299"/>
        <dbReference type="Rhea" id="RHEA-COMP:12192"/>
        <dbReference type="Rhea" id="RHEA-COMP:12193"/>
        <dbReference type="ChEBI" id="CHEBI:15379"/>
        <dbReference type="ChEBI" id="CHEBI:16526"/>
        <dbReference type="ChEBI" id="CHEBI:16810"/>
        <dbReference type="ChEBI" id="CHEBI:16842"/>
        <dbReference type="ChEBI" id="CHEBI:30031"/>
        <dbReference type="ChEBI" id="CHEBI:32875"/>
        <dbReference type="ChEBI" id="CHEBI:64428"/>
        <dbReference type="EC" id="1.14.11.33"/>
    </reaction>
</comment>
<comment type="catalytic activity">
    <reaction evidence="13 14">
        <text>an N(6)-methyl-2'-deoxyadenosine in DNA + 2-oxoglutarate + O2 = a 2'-deoxyadenosine in DNA + formaldehyde + succinate + CO2</text>
        <dbReference type="Rhea" id="RHEA:49524"/>
        <dbReference type="Rhea" id="RHEA-COMP:12418"/>
        <dbReference type="Rhea" id="RHEA-COMP:12419"/>
        <dbReference type="ChEBI" id="CHEBI:15379"/>
        <dbReference type="ChEBI" id="CHEBI:16526"/>
        <dbReference type="ChEBI" id="CHEBI:16810"/>
        <dbReference type="ChEBI" id="CHEBI:16842"/>
        <dbReference type="ChEBI" id="CHEBI:30031"/>
        <dbReference type="ChEBI" id="CHEBI:90615"/>
        <dbReference type="ChEBI" id="CHEBI:90616"/>
        <dbReference type="EC" id="1.14.11.51"/>
    </reaction>
</comment>
<comment type="catalytic activity">
    <reaction evidence="12">
        <text>an N(1)-methyladenosine in tRNA + 2-oxoglutarate + O2 = an adenosine in tRNA + formaldehyde + succinate + CO2</text>
        <dbReference type="Rhea" id="RHEA:54576"/>
        <dbReference type="Rhea" id="RHEA-COMP:10242"/>
        <dbReference type="Rhea" id="RHEA-COMP:12312"/>
        <dbReference type="ChEBI" id="CHEBI:15379"/>
        <dbReference type="ChEBI" id="CHEBI:16526"/>
        <dbReference type="ChEBI" id="CHEBI:16810"/>
        <dbReference type="ChEBI" id="CHEBI:16842"/>
        <dbReference type="ChEBI" id="CHEBI:30031"/>
        <dbReference type="ChEBI" id="CHEBI:74411"/>
        <dbReference type="ChEBI" id="CHEBI:74491"/>
    </reaction>
</comment>
<comment type="catalytic activity">
    <reaction evidence="11">
        <text>5-methylcytidine(34) in mitochondrial tRNA(Met) + 2 2-oxoglutarate + 2 O2 = 5-formylcytidine(34) in mitochondrial tRNA(Met) + 2 succinate + 2 CO2 + H2O</text>
        <dbReference type="Rhea" id="RHEA:54144"/>
        <dbReference type="Rhea" id="RHEA-COMP:13808"/>
        <dbReference type="Rhea" id="RHEA-COMP:13809"/>
        <dbReference type="ChEBI" id="CHEBI:15377"/>
        <dbReference type="ChEBI" id="CHEBI:15379"/>
        <dbReference type="ChEBI" id="CHEBI:16526"/>
        <dbReference type="ChEBI" id="CHEBI:16810"/>
        <dbReference type="ChEBI" id="CHEBI:30031"/>
        <dbReference type="ChEBI" id="CHEBI:74483"/>
        <dbReference type="ChEBI" id="CHEBI:138075"/>
    </reaction>
</comment>
<comment type="catalytic activity">
    <reaction evidence="15">
        <text>an N(3)-methylcytidine in mRNA + 2-oxoglutarate + O2 = a cytidine in mRNA + formaldehyde + succinate + CO2</text>
        <dbReference type="Rhea" id="RHEA:60920"/>
        <dbReference type="Rhea" id="RHEA-COMP:15145"/>
        <dbReference type="Rhea" id="RHEA-COMP:15713"/>
        <dbReference type="ChEBI" id="CHEBI:15379"/>
        <dbReference type="ChEBI" id="CHEBI:16526"/>
        <dbReference type="ChEBI" id="CHEBI:16810"/>
        <dbReference type="ChEBI" id="CHEBI:16842"/>
        <dbReference type="ChEBI" id="CHEBI:30031"/>
        <dbReference type="ChEBI" id="CHEBI:74894"/>
        <dbReference type="ChEBI" id="CHEBI:82748"/>
    </reaction>
    <physiologicalReaction direction="left-to-right" evidence="15">
        <dbReference type="Rhea" id="RHEA:60921"/>
    </physiologicalReaction>
</comment>
<comment type="catalytic activity">
    <reaction evidence="1">
        <text>N(1)-methyladenosine(58) in tRNA + 2-oxoglutarate + O2 = adenosine(58) in tRNA + formaldehyde + succinate + CO2</text>
        <dbReference type="Rhea" id="RHEA:79019"/>
        <dbReference type="Rhea" id="RHEA-COMP:10365"/>
        <dbReference type="Rhea" id="RHEA-COMP:10366"/>
        <dbReference type="ChEBI" id="CHEBI:15379"/>
        <dbReference type="ChEBI" id="CHEBI:16526"/>
        <dbReference type="ChEBI" id="CHEBI:16810"/>
        <dbReference type="ChEBI" id="CHEBI:16842"/>
        <dbReference type="ChEBI" id="CHEBI:30031"/>
        <dbReference type="ChEBI" id="CHEBI:74411"/>
        <dbReference type="ChEBI" id="CHEBI:74491"/>
    </reaction>
</comment>
<comment type="cofactor">
    <cofactor evidence="4 6 13">
        <name>Fe(2+)</name>
        <dbReference type="ChEBI" id="CHEBI:29033"/>
    </cofactor>
    <text evidence="4">Binds 1 Fe(2+) ion per subunit.</text>
</comment>
<comment type="subunit">
    <text evidence="1 7">Monomer (PubMed:19959401). Interacts with DNAJB6 (By similarity).</text>
</comment>
<comment type="subcellular location">
    <subcellularLocation>
        <location evidence="8">Nucleus</location>
    </subcellularLocation>
    <subcellularLocation>
        <location evidence="5 6 11">Mitochondrion</location>
    </subcellularLocation>
    <text evidence="1">Mainly localizes in euchromatin, largely excluded from heterochromatin and nucleoli (By similarity).</text>
</comment>
<comment type="tissue specificity">
    <text evidence="5 6">Ubiquitous.</text>
</comment>
<comment type="similarity">
    <text evidence="18">Belongs to the alkB family.</text>
</comment>
<comment type="caution">
    <text evidence="12 13">The DNA N6-methyl adenine demethylase activity is subject to discussion. According to a report, biochemical assays do not reveal clear DNA N6-methyl adenine demethylase activity in vivo (PubMed:27745969). According to another study, has clear DNA N6-methyl adenine demethylase activity (PubMed:30017583).</text>
</comment>
<comment type="sequence caution" evidence="18">
    <conflict type="frameshift">
        <sequence resource="EMBL-CDS" id="CAA63047"/>
    </conflict>
</comment>
<feature type="chain" id="PRO_0000066668" description="Nucleic acid dioxygenase ALKBH1">
    <location>
        <begin position="1"/>
        <end position="389"/>
    </location>
</feature>
<feature type="domain" description="Fe2OG dioxygenase" evidence="4">
    <location>
        <begin position="208"/>
        <end position="347"/>
    </location>
</feature>
<feature type="region of interest" description="tRNA-binding" evidence="22">
    <location>
        <begin position="86"/>
        <end position="389"/>
    </location>
</feature>
<feature type="binding site" evidence="2">
    <location>
        <position position="144"/>
    </location>
    <ligand>
        <name>substrate</name>
    </ligand>
</feature>
<feature type="binding site" evidence="2">
    <location>
        <begin position="175"/>
        <end position="177"/>
    </location>
    <ligand>
        <name>substrate</name>
    </ligand>
</feature>
<feature type="binding site" evidence="3">
    <location>
        <begin position="220"/>
        <end position="222"/>
    </location>
    <ligand>
        <name>2-oxoglutarate</name>
        <dbReference type="ChEBI" id="CHEBI:16810"/>
    </ligand>
</feature>
<feature type="binding site" evidence="4 20 22">
    <location>
        <position position="231"/>
    </location>
    <ligand>
        <name>Fe cation</name>
        <dbReference type="ChEBI" id="CHEBI:24875"/>
        <note>catalytic</note>
    </ligand>
</feature>
<feature type="binding site" evidence="4 20 21 22 23">
    <location>
        <position position="233"/>
    </location>
    <ligand>
        <name>Fe cation</name>
        <dbReference type="ChEBI" id="CHEBI:24875"/>
        <note>catalytic</note>
    </ligand>
</feature>
<feature type="binding site" evidence="2">
    <location>
        <position position="233"/>
    </location>
    <ligand>
        <name>substrate</name>
    </ligand>
</feature>
<feature type="binding site" evidence="4">
    <location>
        <position position="287"/>
    </location>
    <ligand>
        <name>Fe cation</name>
        <dbReference type="ChEBI" id="CHEBI:24875"/>
        <note>catalytic</note>
    </ligand>
</feature>
<feature type="binding site" evidence="3">
    <location>
        <begin position="338"/>
        <end position="344"/>
    </location>
    <ligand>
        <name>2-oxoglutarate</name>
        <dbReference type="ChEBI" id="CHEBI:16810"/>
    </ligand>
</feature>
<feature type="site" description="Primary catalytic residue forming the imine linkage with DNA" evidence="9">
    <location>
        <position position="133"/>
    </location>
</feature>
<feature type="site" description="Secondary catalytic residue forming the imine linkage with DNA" evidence="9">
    <location>
        <position position="133"/>
    </location>
</feature>
<feature type="sequence variant" id="VAR_048221" description="In dbSNP:rs17825440.">
    <original>M</original>
    <variation>I</variation>
    <location>
        <position position="135"/>
    </location>
</feature>
<feature type="sequence variant" id="VAR_048222" description="In dbSNP:rs6494.">
    <original>M</original>
    <variation>L</variation>
    <location>
        <position position="324"/>
    </location>
</feature>
<feature type="mutagenesis site" description="Does not affect DNA lyase activity." evidence="9">
    <original>K</original>
    <variation>A</variation>
    <location>
        <position position="3"/>
    </location>
</feature>
<feature type="mutagenesis site" description="Moderate decrease in DNA lyase activity. Reduced DNA lyase activity; when associated with A-133." evidence="9">
    <original>K</original>
    <variation>A</variation>
    <location>
        <position position="25"/>
    </location>
</feature>
<feature type="mutagenesis site" description="Does not affect DNA lyase activity." evidence="9">
    <original>K</original>
    <variation>A</variation>
    <location>
        <position position="55"/>
    </location>
</feature>
<feature type="mutagenesis site" description="Does not affect DNA lyase activity." evidence="9">
    <original>K</original>
    <variation>A</variation>
    <location>
        <position position="61"/>
    </location>
</feature>
<feature type="mutagenesis site" description="Does not affect DNA lyase activity." evidence="9">
    <original>K</original>
    <variation>A</variation>
    <location>
        <position position="64"/>
    </location>
</feature>
<feature type="mutagenesis site" description="Does not affect DNA lyase activity." evidence="9">
    <original>K</original>
    <variation>A</variation>
    <location>
        <position position="87"/>
    </location>
</feature>
<feature type="mutagenesis site" description="Does not affect DNA lyase activity." evidence="9">
    <original>K</original>
    <variation>A</variation>
    <location>
        <position position="94"/>
    </location>
</feature>
<feature type="mutagenesis site" description="Does not affect DNA lyase activity." evidence="10">
    <original>H</original>
    <variation>A</variation>
    <location>
        <position position="113"/>
    </location>
</feature>
<feature type="mutagenesis site" description="Does not affect DNA lyase activity." evidence="9">
    <original>K</original>
    <variation>A</variation>
    <location>
        <position position="116"/>
    </location>
</feature>
<feature type="mutagenesis site" description="Does not affect DNA lyase activity." evidence="10">
    <original>C</original>
    <variation>A</variation>
    <location>
        <position position="118"/>
    </location>
</feature>
<feature type="mutagenesis site" description="Does not affect DNA lyase activity." evidence="9">
    <original>K</original>
    <variation>A</variation>
    <location>
        <position position="120"/>
    </location>
</feature>
<feature type="mutagenesis site" description="Does not affect DNA lyase activity." evidence="9">
    <original>K</original>
    <variation>A</variation>
    <location>
        <position position="125"/>
    </location>
</feature>
<feature type="mutagenesis site" description="Does not affect DNA lyase activity." evidence="10">
    <original>C</original>
    <variation>A</variation>
    <location>
        <position position="129"/>
    </location>
</feature>
<feature type="mutagenesis site" description="Reduced DNA lyase activity. Slightly more reduced DNA lyase activity; when associated with A-25. Strongly reduced activity; when associated with A-154." evidence="9">
    <original>K</original>
    <variation>A</variation>
    <location>
        <position position="133"/>
    </location>
</feature>
<feature type="mutagenesis site" description="Does not affect DNA lyase activity." evidence="10">
    <original>H</original>
    <variation>A</variation>
    <location>
        <position position="134"/>
    </location>
</feature>
<feature type="mutagenesis site" description="Does not affect DNA lyase activity." evidence="9">
    <original>K</original>
    <variation>A</variation>
    <location>
        <position position="137"/>
    </location>
</feature>
<feature type="mutagenesis site" description="Does not affect DNA lyase activity." evidence="9">
    <original>K</original>
    <variation>A</variation>
    <location>
        <position position="148"/>
    </location>
</feature>
<feature type="mutagenesis site" description="Does not affect DNA lyase activity. Strongly reduced activity; when associated with A-133." evidence="9">
    <original>K</original>
    <variation>A</variation>
    <location>
        <position position="154"/>
    </location>
</feature>
<feature type="mutagenesis site" description="Does not affect DNA lyase activity." evidence="9">
    <original>K</original>
    <variation>A</variation>
    <location>
        <position position="158"/>
    </location>
</feature>
<feature type="mutagenesis site" description="Does not affect DNA lyase activity." evidence="9">
    <original>K</original>
    <variation>A</variation>
    <location>
        <position position="167"/>
    </location>
</feature>
<feature type="mutagenesis site" description="Does not affect DNA lyase activity." evidence="9">
    <original>K</original>
    <variation>A</variation>
    <location>
        <position position="182"/>
    </location>
</feature>
<feature type="mutagenesis site" description="Does not affect DNA lyase activity." evidence="9">
    <original>K</original>
    <variation>A</variation>
    <location>
        <position position="183"/>
    </location>
</feature>
<feature type="mutagenesis site" description="Reduces Fe2OG dioxygenase activity by 50%." evidence="6">
    <original>I</original>
    <variation>L</variation>
    <location>
        <position position="218"/>
    </location>
</feature>
<feature type="mutagenesis site" description="Loss of catalytic activity. Abolishes ability to regulate translation in respose to glucose deprivation." evidence="12">
    <original>HVD</original>
    <variation>AVA</variation>
    <location>
        <begin position="231"/>
        <end position="233"/>
    </location>
</feature>
<feature type="mutagenesis site" description="Near loss of Fe2OG dioxygenase activity. No effect on DNA lyase activity." evidence="6 7">
    <original>H</original>
    <variation>A</variation>
    <location>
        <position position="231"/>
    </location>
</feature>
<feature type="mutagenesis site" description="Loss of Fe2OG dioxygenase activity. No effect on DNA lyase activity. Abolishes ability to mediate oxidation of mt-tRNA(Met) methylated at cytosine(34) to form 5-formylcytosine (f(5)c). Abolished DNA N6-methyl adenine demethylase activity." evidence="6 7 11 13 15">
    <original>D</original>
    <variation>A</variation>
    <location>
        <position position="233"/>
    </location>
</feature>
<feature type="mutagenesis site" description="Does not affect DNA lyase activity." evidence="9">
    <original>K</original>
    <variation>A</variation>
    <location>
        <position position="241"/>
    </location>
</feature>
<feature type="mutagenesis site" description="Loss of Fe2OG dioxygenase activity. No effect on DNA lyase activity." evidence="6 7">
    <original>H</original>
    <variation>A</variation>
    <location>
        <position position="287"/>
    </location>
</feature>
<feature type="mutagenesis site" description="Does not affect DNA lyase activity." evidence="10">
    <original>H</original>
    <variation>A</variation>
    <location>
        <position position="303"/>
    </location>
</feature>
<feature type="mutagenesis site" description="Does not affect DNA lyase activity." evidence="10">
    <original>C</original>
    <variation>A</variation>
    <location>
        <position position="304"/>
    </location>
</feature>
<feature type="mutagenesis site" description="Does not affect DNA lyase activity." evidence="9">
    <original>K</original>
    <variation>A</variation>
    <location>
        <position position="335"/>
    </location>
</feature>
<feature type="mutagenesis site" description="Reduced Fe2OG dioxygenase activity. Abolishes ability to mediate oxidation of mt-tRNA(Met) methylated at cytosine(34) to form 5-formylcytosine (f(5)c)." evidence="6 11">
    <original>R</original>
    <variation>A</variation>
    <location>
        <position position="338"/>
    </location>
</feature>
<feature type="mutagenesis site" description="Reduced Fe2OG dioxygenase activity." evidence="6">
    <original>R</original>
    <variation>A</variation>
    <location>
        <position position="344"/>
    </location>
</feature>
<feature type="mutagenesis site" description="Does not affect DNA lyase activity." evidence="9">
    <original>K</original>
    <variation>A</variation>
    <location>
        <position position="362"/>
    </location>
</feature>
<feature type="mutagenesis site" description="Does not affect DNA lyase activity." evidence="10">
    <original>C</original>
    <variation>A</variation>
    <location>
        <position position="371"/>
    </location>
</feature>
<feature type="mutagenesis site" description="Does not affect DNA lyase activity." evidence="10">
    <original>H</original>
    <variation>A</variation>
    <location>
        <position position="372"/>
    </location>
</feature>
<feature type="mutagenesis site" description="Does not affect DNA lyase activity." evidence="9">
    <original>K</original>
    <variation>A</variation>
    <location>
        <position position="381"/>
    </location>
</feature>
<feature type="sequence conflict" description="In Ref. 1; CAA63047." evidence="18" ref="1">
    <original>K</original>
    <variation>T</variation>
    <location>
        <position position="133"/>
    </location>
</feature>
<feature type="sequence conflict" description="In Ref. 1; CAA63047." evidence="18" ref="1">
    <original>TA</original>
    <variation>PP</variation>
    <location>
        <begin position="266"/>
        <end position="267"/>
    </location>
</feature>
<feature type="sequence conflict" description="In Ref. 3; AAH25787." evidence="18" ref="3">
    <original>D</original>
    <variation>H</variation>
    <location>
        <position position="388"/>
    </location>
</feature>
<feature type="helix" evidence="26">
    <location>
        <begin position="22"/>
        <end position="32"/>
    </location>
</feature>
<feature type="helix" evidence="26">
    <location>
        <begin position="38"/>
        <end position="40"/>
    </location>
</feature>
<feature type="strand" evidence="27">
    <location>
        <begin position="50"/>
        <end position="52"/>
    </location>
</feature>
<feature type="strand" evidence="27">
    <location>
        <begin position="54"/>
        <end position="56"/>
    </location>
</feature>
<feature type="helix" evidence="26">
    <location>
        <begin position="57"/>
        <end position="60"/>
    </location>
</feature>
<feature type="strand" evidence="26">
    <location>
        <begin position="62"/>
        <end position="64"/>
    </location>
</feature>
<feature type="helix" evidence="26">
    <location>
        <begin position="69"/>
        <end position="71"/>
    </location>
</feature>
<feature type="helix" evidence="26">
    <location>
        <begin position="74"/>
        <end position="80"/>
    </location>
</feature>
<feature type="helix" evidence="26">
    <location>
        <begin position="85"/>
        <end position="87"/>
    </location>
</feature>
<feature type="strand" evidence="26">
    <location>
        <begin position="91"/>
        <end position="93"/>
    </location>
</feature>
<feature type="strand" evidence="26">
    <location>
        <begin position="99"/>
        <end position="102"/>
    </location>
</feature>
<feature type="turn" evidence="26">
    <location>
        <begin position="108"/>
        <end position="110"/>
    </location>
</feature>
<feature type="helix" evidence="26">
    <location>
        <begin position="111"/>
        <end position="120"/>
    </location>
</feature>
<feature type="turn" evidence="26">
    <location>
        <begin position="121"/>
        <end position="123"/>
    </location>
</feature>
<feature type="strand" evidence="26">
    <location>
        <begin position="127"/>
        <end position="129"/>
    </location>
</feature>
<feature type="strand" evidence="27">
    <location>
        <begin position="132"/>
        <end position="135"/>
    </location>
</feature>
<feature type="helix" evidence="25">
    <location>
        <begin position="137"/>
        <end position="140"/>
    </location>
</feature>
<feature type="helix" evidence="26">
    <location>
        <begin position="143"/>
        <end position="152"/>
    </location>
</feature>
<feature type="helix" evidence="26">
    <location>
        <begin position="164"/>
        <end position="167"/>
    </location>
</feature>
<feature type="strand" evidence="26">
    <location>
        <begin position="170"/>
        <end position="175"/>
    </location>
</feature>
<feature type="turn" evidence="26">
    <location>
        <begin position="179"/>
        <end position="182"/>
    </location>
</feature>
<feature type="strand" evidence="26">
    <location>
        <begin position="186"/>
        <end position="189"/>
    </location>
</feature>
<feature type="helix" evidence="26">
    <location>
        <begin position="194"/>
        <end position="206"/>
    </location>
</feature>
<feature type="strand" evidence="26">
    <location>
        <begin position="216"/>
        <end position="223"/>
    </location>
</feature>
<feature type="strand" evidence="26">
    <location>
        <begin position="228"/>
        <end position="231"/>
    </location>
</feature>
<feature type="strand" evidence="27">
    <location>
        <begin position="237"/>
        <end position="239"/>
    </location>
</feature>
<feature type="strand" evidence="26">
    <location>
        <begin position="243"/>
        <end position="250"/>
    </location>
</feature>
<feature type="strand" evidence="26">
    <location>
        <begin position="252"/>
        <end position="256"/>
    </location>
</feature>
<feature type="strand" evidence="26">
    <location>
        <begin position="266"/>
        <end position="270"/>
    </location>
</feature>
<feature type="strand" evidence="26">
    <location>
        <begin position="275"/>
        <end position="278"/>
    </location>
</feature>
<feature type="helix" evidence="26">
    <location>
        <begin position="280"/>
        <end position="284"/>
    </location>
</feature>
<feature type="strand" evidence="26">
    <location>
        <begin position="287"/>
        <end position="292"/>
    </location>
</feature>
<feature type="strand" evidence="25">
    <location>
        <begin position="298"/>
        <end position="300"/>
    </location>
</feature>
<feature type="helix" evidence="26">
    <location>
        <begin position="303"/>
        <end position="305"/>
    </location>
</feature>
<feature type="helix" evidence="26">
    <location>
        <begin position="324"/>
        <end position="334"/>
    </location>
</feature>
<feature type="strand" evidence="26">
    <location>
        <begin position="337"/>
        <end position="344"/>
    </location>
</feature>